<proteinExistence type="inferred from homology"/>
<feature type="chain" id="PRO_0000078506" description="Chaperone protein DnaK">
    <location>
        <begin position="1"/>
        <end position="631"/>
    </location>
</feature>
<feature type="region of interest" description="Disordered" evidence="2">
    <location>
        <begin position="601"/>
        <end position="631"/>
    </location>
</feature>
<feature type="modified residue" description="Phosphothreonine; by autocatalysis" evidence="1">
    <location>
        <position position="198"/>
    </location>
</feature>
<accession>O52064</accession>
<comment type="function">
    <text evidence="1">Acts as a chaperone.</text>
</comment>
<comment type="induction">
    <text evidence="1">By stress conditions e.g. heat shock (By similarity).</text>
</comment>
<comment type="similarity">
    <text evidence="3">Belongs to the heat shock protein 70 family.</text>
</comment>
<protein>
    <recommendedName>
        <fullName>Chaperone protein DnaK</fullName>
    </recommendedName>
    <alternativeName>
        <fullName>HSP70</fullName>
    </alternativeName>
    <alternativeName>
        <fullName>Heat shock 70 kDa protein</fullName>
    </alternativeName>
    <alternativeName>
        <fullName>Heat shock protein 70</fullName>
    </alternativeName>
</protein>
<reference key="1">
    <citation type="submission" date="1997-08" db="EMBL/GenBank/DDBJ databases">
        <title>The dnaK and dnaJ chaperone genes of Pasteurella haemolytica A1.</title>
        <authorList>
            <person name="Al S.L."/>
            <person name="Lo R.Y.C."/>
        </authorList>
    </citation>
    <scope>NUCLEOTIDE SEQUENCE [GENOMIC DNA]</scope>
    <source>
        <strain>Serotype A1</strain>
    </source>
</reference>
<gene>
    <name type="primary">dnaK</name>
</gene>
<organism>
    <name type="scientific">Mannheimia haemolytica</name>
    <name type="common">Pasteurella haemolytica</name>
    <dbReference type="NCBI Taxonomy" id="75985"/>
    <lineage>
        <taxon>Bacteria</taxon>
        <taxon>Pseudomonadati</taxon>
        <taxon>Pseudomonadota</taxon>
        <taxon>Gammaproteobacteria</taxon>
        <taxon>Pasteurellales</taxon>
        <taxon>Pasteurellaceae</taxon>
        <taxon>Mannheimia</taxon>
    </lineage>
</organism>
<dbReference type="EMBL" id="AF017730">
    <property type="protein sequence ID" value="AAB94554.1"/>
    <property type="molecule type" value="Genomic_DNA"/>
</dbReference>
<dbReference type="SMR" id="O52064"/>
<dbReference type="STRING" id="75985.WC39_01750"/>
<dbReference type="GO" id="GO:0005524">
    <property type="term" value="F:ATP binding"/>
    <property type="evidence" value="ECO:0007669"/>
    <property type="project" value="UniProtKB-UniRule"/>
</dbReference>
<dbReference type="GO" id="GO:0140662">
    <property type="term" value="F:ATP-dependent protein folding chaperone"/>
    <property type="evidence" value="ECO:0007669"/>
    <property type="project" value="InterPro"/>
</dbReference>
<dbReference type="GO" id="GO:0051082">
    <property type="term" value="F:unfolded protein binding"/>
    <property type="evidence" value="ECO:0007669"/>
    <property type="project" value="InterPro"/>
</dbReference>
<dbReference type="CDD" id="cd10234">
    <property type="entry name" value="ASKHA_NBD_HSP70_DnaK-like"/>
    <property type="match status" value="1"/>
</dbReference>
<dbReference type="FunFam" id="2.60.34.10:FF:000014">
    <property type="entry name" value="Chaperone protein DnaK HSP70"/>
    <property type="match status" value="1"/>
</dbReference>
<dbReference type="FunFam" id="3.30.30.30:FF:000003">
    <property type="entry name" value="Heat shock protein 9"/>
    <property type="match status" value="1"/>
</dbReference>
<dbReference type="FunFam" id="1.20.1270.10:FF:000001">
    <property type="entry name" value="Molecular chaperone DnaK"/>
    <property type="match status" value="1"/>
</dbReference>
<dbReference type="FunFam" id="3.30.420.40:FF:000004">
    <property type="entry name" value="Molecular chaperone DnaK"/>
    <property type="match status" value="1"/>
</dbReference>
<dbReference type="FunFam" id="3.90.640.10:FF:000003">
    <property type="entry name" value="Molecular chaperone DnaK"/>
    <property type="match status" value="1"/>
</dbReference>
<dbReference type="Gene3D" id="1.20.1270.10">
    <property type="match status" value="1"/>
</dbReference>
<dbReference type="Gene3D" id="3.30.420.40">
    <property type="match status" value="2"/>
</dbReference>
<dbReference type="Gene3D" id="3.90.640.10">
    <property type="entry name" value="Actin, Chain A, domain 4"/>
    <property type="match status" value="1"/>
</dbReference>
<dbReference type="Gene3D" id="2.60.34.10">
    <property type="entry name" value="Substrate Binding Domain Of DNAk, Chain A, domain 1"/>
    <property type="match status" value="1"/>
</dbReference>
<dbReference type="HAMAP" id="MF_00332">
    <property type="entry name" value="DnaK"/>
    <property type="match status" value="1"/>
</dbReference>
<dbReference type="InterPro" id="IPR043129">
    <property type="entry name" value="ATPase_NBD"/>
</dbReference>
<dbReference type="InterPro" id="IPR012725">
    <property type="entry name" value="Chaperone_DnaK"/>
</dbReference>
<dbReference type="InterPro" id="IPR018181">
    <property type="entry name" value="Heat_shock_70_CS"/>
</dbReference>
<dbReference type="InterPro" id="IPR029048">
    <property type="entry name" value="HSP70_C_sf"/>
</dbReference>
<dbReference type="InterPro" id="IPR029047">
    <property type="entry name" value="HSP70_peptide-bd_sf"/>
</dbReference>
<dbReference type="InterPro" id="IPR013126">
    <property type="entry name" value="Hsp_70_fam"/>
</dbReference>
<dbReference type="NCBIfam" id="NF001413">
    <property type="entry name" value="PRK00290.1"/>
    <property type="match status" value="1"/>
</dbReference>
<dbReference type="NCBIfam" id="TIGR02350">
    <property type="entry name" value="prok_dnaK"/>
    <property type="match status" value="1"/>
</dbReference>
<dbReference type="PANTHER" id="PTHR19375">
    <property type="entry name" value="HEAT SHOCK PROTEIN 70KDA"/>
    <property type="match status" value="1"/>
</dbReference>
<dbReference type="Pfam" id="PF00012">
    <property type="entry name" value="HSP70"/>
    <property type="match status" value="1"/>
</dbReference>
<dbReference type="PRINTS" id="PR00301">
    <property type="entry name" value="HEATSHOCK70"/>
</dbReference>
<dbReference type="SUPFAM" id="SSF53067">
    <property type="entry name" value="Actin-like ATPase domain"/>
    <property type="match status" value="2"/>
</dbReference>
<dbReference type="SUPFAM" id="SSF100934">
    <property type="entry name" value="Heat shock protein 70kD (HSP70), C-terminal subdomain"/>
    <property type="match status" value="1"/>
</dbReference>
<dbReference type="SUPFAM" id="SSF100920">
    <property type="entry name" value="Heat shock protein 70kD (HSP70), peptide-binding domain"/>
    <property type="match status" value="1"/>
</dbReference>
<dbReference type="PROSITE" id="PS00297">
    <property type="entry name" value="HSP70_1"/>
    <property type="match status" value="1"/>
</dbReference>
<dbReference type="PROSITE" id="PS00329">
    <property type="entry name" value="HSP70_2"/>
    <property type="match status" value="1"/>
</dbReference>
<dbReference type="PROSITE" id="PS01036">
    <property type="entry name" value="HSP70_3"/>
    <property type="match status" value="1"/>
</dbReference>
<evidence type="ECO:0000250" key="1"/>
<evidence type="ECO:0000256" key="2">
    <source>
        <dbReference type="SAM" id="MobiDB-lite"/>
    </source>
</evidence>
<evidence type="ECO:0000305" key="3"/>
<keyword id="KW-0067">ATP-binding</keyword>
<keyword id="KW-0143">Chaperone</keyword>
<keyword id="KW-0547">Nucleotide-binding</keyword>
<keyword id="KW-0597">Phosphoprotein</keyword>
<keyword id="KW-0346">Stress response</keyword>
<name>DNAK_MANHA</name>
<sequence length="631" mass="67980">MGKIIGIDLGTTNSCVAVMDGDKPRVIENAEGARTTPSIIAYTDKETLVGQPAKRQAITNPKNTLFAIKRLIGRRFTDAEVQRDIEIMPFEISKADNGDAWVTVKGDKLAPPQISAEILKKMKKTAEDFLGEPVTEAVITVPAYFNDAQRQATKDAGRIAGLDVKRIINEPTAAALAYGLDSKKENQTIAVYDLGGGTFDISIIEIDNFDGEQTFEVRATNGDTHLGGEDFDNRVINYLVEEFKKQGVDLRNDPMAMQRVKEAAEKAKIELSSAQETEVNLPYITADATGPKHLNIKVTRAKLESLVEDLVNRSLEPLKTALADAGLSVGDINDVILVGGQTRMPLVQKKVADFFGKTRKDVNPDEAVMAIGAAVQGGVLSGSVTDVLLLDVTPLSLGIETMGGVMTTLIEKNTTIPTKKSQVFSTAEDNQSAVTIHVLQGERKRAADNKSLGQFNLEGINPAPRGMPQIEVTFDIDANGIINVSAKDKNTGKEQQIKIQASSGLSDAEVEQMVRDAEANAEADKKFEELVQVCNQADGIAHATRKQITEAGDALNADDKAKIEAAISELETAAKGEDKAEIEAKIEALIKASEPLMLAAQAKAQGGEQPQQSQKDDGVVDAEFEEVKDNK</sequence>